<name>UNG_BACTN</name>
<feature type="chain" id="PRO_0000176068" description="Uracil-DNA glycosylase">
    <location>
        <begin position="1"/>
        <end position="220"/>
    </location>
</feature>
<feature type="active site" description="Proton acceptor" evidence="1">
    <location>
        <position position="65"/>
    </location>
</feature>
<dbReference type="EC" id="3.2.2.27" evidence="1"/>
<dbReference type="EMBL" id="AE015928">
    <property type="protein sequence ID" value="AAO77237.1"/>
    <property type="molecule type" value="Genomic_DNA"/>
</dbReference>
<dbReference type="RefSeq" id="NP_811043.1">
    <property type="nucleotide sequence ID" value="NC_004663.1"/>
</dbReference>
<dbReference type="RefSeq" id="WP_008759768.1">
    <property type="nucleotide sequence ID" value="NZ_UYXG01000026.1"/>
</dbReference>
<dbReference type="SMR" id="Q8A5V6"/>
<dbReference type="FunCoup" id="Q8A5V6">
    <property type="interactions" value="339"/>
</dbReference>
<dbReference type="STRING" id="226186.BT_2130"/>
<dbReference type="PaxDb" id="226186-BT_2130"/>
<dbReference type="EnsemblBacteria" id="AAO77237">
    <property type="protein sequence ID" value="AAO77237"/>
    <property type="gene ID" value="BT_2130"/>
</dbReference>
<dbReference type="GeneID" id="60928119"/>
<dbReference type="KEGG" id="bth:BT_2130"/>
<dbReference type="PATRIC" id="fig|226186.12.peg.2192"/>
<dbReference type="eggNOG" id="COG0692">
    <property type="taxonomic scope" value="Bacteria"/>
</dbReference>
<dbReference type="HOGENOM" id="CLU_032162_3_0_10"/>
<dbReference type="InParanoid" id="Q8A5V6"/>
<dbReference type="OrthoDB" id="9804372at2"/>
<dbReference type="Proteomes" id="UP000001414">
    <property type="component" value="Chromosome"/>
</dbReference>
<dbReference type="GO" id="GO:0005737">
    <property type="term" value="C:cytoplasm"/>
    <property type="evidence" value="ECO:0007669"/>
    <property type="project" value="UniProtKB-SubCell"/>
</dbReference>
<dbReference type="GO" id="GO:0004844">
    <property type="term" value="F:uracil DNA N-glycosylase activity"/>
    <property type="evidence" value="ECO:0007669"/>
    <property type="project" value="UniProtKB-UniRule"/>
</dbReference>
<dbReference type="GO" id="GO:0097510">
    <property type="term" value="P:base-excision repair, AP site formation via deaminated base removal"/>
    <property type="evidence" value="ECO:0000318"/>
    <property type="project" value="GO_Central"/>
</dbReference>
<dbReference type="CDD" id="cd10027">
    <property type="entry name" value="UDG-F1-like"/>
    <property type="match status" value="1"/>
</dbReference>
<dbReference type="FunFam" id="3.40.470.10:FF:000001">
    <property type="entry name" value="Uracil-DNA glycosylase"/>
    <property type="match status" value="1"/>
</dbReference>
<dbReference type="Gene3D" id="3.40.470.10">
    <property type="entry name" value="Uracil-DNA glycosylase-like domain"/>
    <property type="match status" value="1"/>
</dbReference>
<dbReference type="HAMAP" id="MF_00148">
    <property type="entry name" value="UDG"/>
    <property type="match status" value="1"/>
</dbReference>
<dbReference type="InterPro" id="IPR002043">
    <property type="entry name" value="UDG_fam1"/>
</dbReference>
<dbReference type="InterPro" id="IPR018085">
    <property type="entry name" value="Ura-DNA_Glyclase_AS"/>
</dbReference>
<dbReference type="InterPro" id="IPR005122">
    <property type="entry name" value="Uracil-DNA_glycosylase-like"/>
</dbReference>
<dbReference type="InterPro" id="IPR036895">
    <property type="entry name" value="Uracil-DNA_glycosylase-like_sf"/>
</dbReference>
<dbReference type="NCBIfam" id="NF003588">
    <property type="entry name" value="PRK05254.1-1"/>
    <property type="match status" value="1"/>
</dbReference>
<dbReference type="NCBIfam" id="NF003589">
    <property type="entry name" value="PRK05254.1-2"/>
    <property type="match status" value="1"/>
</dbReference>
<dbReference type="NCBIfam" id="NF003591">
    <property type="entry name" value="PRK05254.1-4"/>
    <property type="match status" value="1"/>
</dbReference>
<dbReference type="NCBIfam" id="NF003592">
    <property type="entry name" value="PRK05254.1-5"/>
    <property type="match status" value="1"/>
</dbReference>
<dbReference type="NCBIfam" id="TIGR00628">
    <property type="entry name" value="ung"/>
    <property type="match status" value="1"/>
</dbReference>
<dbReference type="PANTHER" id="PTHR11264">
    <property type="entry name" value="URACIL-DNA GLYCOSYLASE"/>
    <property type="match status" value="1"/>
</dbReference>
<dbReference type="PANTHER" id="PTHR11264:SF0">
    <property type="entry name" value="URACIL-DNA GLYCOSYLASE"/>
    <property type="match status" value="1"/>
</dbReference>
<dbReference type="Pfam" id="PF03167">
    <property type="entry name" value="UDG"/>
    <property type="match status" value="1"/>
</dbReference>
<dbReference type="SMART" id="SM00986">
    <property type="entry name" value="UDG"/>
    <property type="match status" value="1"/>
</dbReference>
<dbReference type="SMART" id="SM00987">
    <property type="entry name" value="UreE_C"/>
    <property type="match status" value="1"/>
</dbReference>
<dbReference type="SUPFAM" id="SSF52141">
    <property type="entry name" value="Uracil-DNA glycosylase-like"/>
    <property type="match status" value="1"/>
</dbReference>
<dbReference type="PROSITE" id="PS00130">
    <property type="entry name" value="U_DNA_GLYCOSYLASE"/>
    <property type="match status" value="1"/>
</dbReference>
<accession>Q8A5V6</accession>
<protein>
    <recommendedName>
        <fullName evidence="1">Uracil-DNA glycosylase</fullName>
        <shortName evidence="1">UDG</shortName>
        <ecNumber evidence="1">3.2.2.27</ecNumber>
    </recommendedName>
</protein>
<evidence type="ECO:0000255" key="1">
    <source>
        <dbReference type="HAMAP-Rule" id="MF_00148"/>
    </source>
</evidence>
<keyword id="KW-0963">Cytoplasm</keyword>
<keyword id="KW-0227">DNA damage</keyword>
<keyword id="KW-0234">DNA repair</keyword>
<keyword id="KW-0378">Hydrolase</keyword>
<keyword id="KW-1185">Reference proteome</keyword>
<organism>
    <name type="scientific">Bacteroides thetaiotaomicron (strain ATCC 29148 / DSM 2079 / JCM 5827 / CCUG 10774 / NCTC 10582 / VPI-5482 / E50)</name>
    <dbReference type="NCBI Taxonomy" id="226186"/>
    <lineage>
        <taxon>Bacteria</taxon>
        <taxon>Pseudomonadati</taxon>
        <taxon>Bacteroidota</taxon>
        <taxon>Bacteroidia</taxon>
        <taxon>Bacteroidales</taxon>
        <taxon>Bacteroidaceae</taxon>
        <taxon>Bacteroides</taxon>
    </lineage>
</organism>
<sequence>MNVQIEESWKTHLQPEFEKDYFRTLTEFVKSEYSQYQIFPPGKLIFNAFNLCPFDKVKVVIIGQDPYHGPGQAHGLCFSVNDGVPFPPSLVNIFKEIKADIGTDAPTTGNLTRWAEQGVLLLNATLTVRAHQAGSHQNRGWEAFTDAAIRALAEEREHLVFILWGAYAQRKGAFIDRNKHLVLSSAHPSPLSAYNGFFGNKHFSRANDYLKANGETEIIW</sequence>
<proteinExistence type="inferred from homology"/>
<gene>
    <name evidence="1" type="primary">ung</name>
    <name type="ordered locus">BT_2130</name>
</gene>
<comment type="function">
    <text evidence="1">Excises uracil residues from the DNA which can arise as a result of misincorporation of dUMP residues by DNA polymerase or due to deamination of cytosine.</text>
</comment>
<comment type="catalytic activity">
    <reaction evidence="1">
        <text>Hydrolyzes single-stranded DNA or mismatched double-stranded DNA and polynucleotides, releasing free uracil.</text>
        <dbReference type="EC" id="3.2.2.27"/>
    </reaction>
</comment>
<comment type="subcellular location">
    <subcellularLocation>
        <location evidence="1">Cytoplasm</location>
    </subcellularLocation>
</comment>
<comment type="similarity">
    <text evidence="1">Belongs to the uracil-DNA glycosylase (UDG) superfamily. UNG family.</text>
</comment>
<reference key="1">
    <citation type="journal article" date="2003" name="Science">
        <title>A genomic view of the human-Bacteroides thetaiotaomicron symbiosis.</title>
        <authorList>
            <person name="Xu J."/>
            <person name="Bjursell M.K."/>
            <person name="Himrod J."/>
            <person name="Deng S."/>
            <person name="Carmichael L.K."/>
            <person name="Chiang H.C."/>
            <person name="Hooper L.V."/>
            <person name="Gordon J.I."/>
        </authorList>
    </citation>
    <scope>NUCLEOTIDE SEQUENCE [LARGE SCALE GENOMIC DNA]</scope>
    <source>
        <strain>ATCC 29148 / DSM 2079 / JCM 5827 / CCUG 10774 / NCTC 10582 / VPI-5482 / E50</strain>
    </source>
</reference>